<sequence length="300" mass="34389">MAEEVSTLMKATVLMRQPGRVQEIVGALRKGGGDRLQVISDFDMTLSRFAYNGKRCPSSYNILDNSKIISEECRKELTALLHHYYPIEIDPHRTVKEKLPHMVEWWTKAHNLLCQQKIQKFQIAQVVRESNAMLREGYKTFFNTLYHNNIPLFIFSAGIGDILEEIIRQMKVFHPNIHIVSNYMDFNEDGFLQGFKGQLIHTYNKNSSACENSGYFQQLEGKTNVILLGDSIGDLTMADGVPGVQNILKIGFLNDKVEERRERYMDSYDIVLEKDETLDVVNGLLQHILCQGVQLEMQGP</sequence>
<dbReference type="EC" id="3.1.3.91" evidence="4"/>
<dbReference type="EC" id="3.1.3.5" evidence="4"/>
<dbReference type="EMBL" id="AC091172">
    <property type="status" value="NOT_ANNOTATED_CDS"/>
    <property type="molecule type" value="Genomic_DNA"/>
</dbReference>
<dbReference type="EMBL" id="CH471152">
    <property type="protein sequence ID" value="EAW60771.1"/>
    <property type="molecule type" value="Genomic_DNA"/>
</dbReference>
<dbReference type="EMBL" id="BC013742">
    <property type="protein sequence ID" value="AAH13742.2"/>
    <property type="molecule type" value="mRNA"/>
</dbReference>
<dbReference type="EMBL" id="BC014132">
    <property type="protein sequence ID" value="AAH14132.2"/>
    <property type="molecule type" value="mRNA"/>
</dbReference>
<dbReference type="EMBL" id="BC016971">
    <property type="protein sequence ID" value="AAH16971.2"/>
    <property type="molecule type" value="mRNA"/>
</dbReference>
<dbReference type="EMBL" id="BC067788">
    <property type="protein sequence ID" value="AAH67788.1"/>
    <property type="molecule type" value="mRNA"/>
</dbReference>
<dbReference type="CCDS" id="CCDS11410.2">
    <molecule id="Q969T7-1"/>
</dbReference>
<dbReference type="RefSeq" id="NP_443167.4">
    <molecule id="Q969T7-1"/>
    <property type="nucleotide sequence ID" value="NM_052935.4"/>
</dbReference>
<dbReference type="PDB" id="7ZEE">
    <property type="method" value="X-ray"/>
    <property type="resolution" value="1.36 A"/>
    <property type="chains" value="A=1-300"/>
</dbReference>
<dbReference type="PDB" id="7ZEG">
    <property type="method" value="X-ray"/>
    <property type="resolution" value="1.56 A"/>
    <property type="chains" value="A/B=1-300"/>
</dbReference>
<dbReference type="PDB" id="7ZEH">
    <property type="method" value="X-ray"/>
    <property type="resolution" value="1.50 A"/>
    <property type="chains" value="A/B/C/D=1-300"/>
</dbReference>
<dbReference type="PDBsum" id="7ZEE"/>
<dbReference type="PDBsum" id="7ZEG"/>
<dbReference type="PDBsum" id="7ZEH"/>
<dbReference type="SMR" id="Q969T7"/>
<dbReference type="BioGRID" id="125410">
    <property type="interactions" value="12"/>
</dbReference>
<dbReference type="FunCoup" id="Q969T7">
    <property type="interactions" value="1030"/>
</dbReference>
<dbReference type="IntAct" id="Q969T7">
    <property type="interactions" value="3"/>
</dbReference>
<dbReference type="STRING" id="9606.ENSP00000389948"/>
<dbReference type="BindingDB" id="Q969T7"/>
<dbReference type="ChEMBL" id="CHEMBL4295921"/>
<dbReference type="DEPOD" id="NT5C3B"/>
<dbReference type="GlyGen" id="Q969T7">
    <property type="glycosylation" value="1 site, 1 O-linked glycan (1 site)"/>
</dbReference>
<dbReference type="iPTMnet" id="Q969T7"/>
<dbReference type="PhosphoSitePlus" id="Q969T7"/>
<dbReference type="BioMuta" id="NT5C3B"/>
<dbReference type="DMDM" id="476007845"/>
<dbReference type="jPOST" id="Q969T7"/>
<dbReference type="MassIVE" id="Q969T7"/>
<dbReference type="PaxDb" id="9606-ENSP00000389948"/>
<dbReference type="PeptideAtlas" id="Q969T7"/>
<dbReference type="ProteomicsDB" id="10565"/>
<dbReference type="ProteomicsDB" id="75844">
    <molecule id="Q969T7-1"/>
</dbReference>
<dbReference type="Pumba" id="Q969T7"/>
<dbReference type="Antibodypedia" id="28986">
    <property type="antibodies" value="73 antibodies from 17 providers"/>
</dbReference>
<dbReference type="DNASU" id="115024"/>
<dbReference type="Ensembl" id="ENST00000435506.7">
    <molecule id="Q969T7-1"/>
    <property type="protein sequence ID" value="ENSP00000389948.2"/>
    <property type="gene ID" value="ENSG00000141698.17"/>
</dbReference>
<dbReference type="GeneID" id="115024"/>
<dbReference type="KEGG" id="hsa:115024"/>
<dbReference type="MANE-Select" id="ENST00000435506.7">
    <property type="protein sequence ID" value="ENSP00000389948.2"/>
    <property type="RefSeq nucleotide sequence ID" value="NM_052935.5"/>
    <property type="RefSeq protein sequence ID" value="NP_443167.4"/>
</dbReference>
<dbReference type="UCSC" id="uc021txo.2">
    <molecule id="Q969T7-1"/>
    <property type="organism name" value="human"/>
</dbReference>
<dbReference type="AGR" id="HGNC:28300"/>
<dbReference type="CTD" id="115024"/>
<dbReference type="GeneCards" id="NT5C3B"/>
<dbReference type="HGNC" id="HGNC:28300">
    <property type="gene designation" value="NT5C3B"/>
</dbReference>
<dbReference type="HPA" id="ENSG00000141698">
    <property type="expression patterns" value="Low tissue specificity"/>
</dbReference>
<dbReference type="MIM" id="620041">
    <property type="type" value="gene"/>
</dbReference>
<dbReference type="neXtProt" id="NX_Q969T7"/>
<dbReference type="OpenTargets" id="ENSG00000141698"/>
<dbReference type="VEuPathDB" id="HostDB:ENSG00000141698"/>
<dbReference type="eggNOG" id="KOG3128">
    <property type="taxonomic scope" value="Eukaryota"/>
</dbReference>
<dbReference type="GeneTree" id="ENSGT00390000012959"/>
<dbReference type="InParanoid" id="Q969T7"/>
<dbReference type="OMA" id="HIPWIYL"/>
<dbReference type="OrthoDB" id="10014216at2759"/>
<dbReference type="PAN-GO" id="Q969T7">
    <property type="GO annotations" value="1 GO annotation based on evolutionary models"/>
</dbReference>
<dbReference type="TreeFam" id="TF314663"/>
<dbReference type="PathwayCommons" id="Q969T7"/>
<dbReference type="Reactome" id="R-HSA-429958">
    <property type="pathway name" value="mRNA decay by 3' to 5' exoribonuclease"/>
</dbReference>
<dbReference type="SABIO-RK" id="Q969T7"/>
<dbReference type="SignaLink" id="Q969T7"/>
<dbReference type="BioGRID-ORCS" id="115024">
    <property type="hits" value="16 hits in 1144 CRISPR screens"/>
</dbReference>
<dbReference type="ChiTaRS" id="NT5C3B">
    <property type="organism name" value="human"/>
</dbReference>
<dbReference type="GenomeRNAi" id="115024"/>
<dbReference type="Pharos" id="Q969T7">
    <property type="development level" value="Tbio"/>
</dbReference>
<dbReference type="PRO" id="PR:Q969T7"/>
<dbReference type="Proteomes" id="UP000005640">
    <property type="component" value="Chromosome 17"/>
</dbReference>
<dbReference type="RNAct" id="Q969T7">
    <property type="molecule type" value="protein"/>
</dbReference>
<dbReference type="Bgee" id="ENSG00000141698">
    <property type="expression patterns" value="Expressed in nucleus accumbens and 186 other cell types or tissues"/>
</dbReference>
<dbReference type="ExpressionAtlas" id="Q969T7">
    <property type="expression patterns" value="baseline and differential"/>
</dbReference>
<dbReference type="GO" id="GO:0005737">
    <property type="term" value="C:cytoplasm"/>
    <property type="evidence" value="ECO:0000318"/>
    <property type="project" value="GO_Central"/>
</dbReference>
<dbReference type="GO" id="GO:0005829">
    <property type="term" value="C:cytosol"/>
    <property type="evidence" value="ECO:0000304"/>
    <property type="project" value="Reactome"/>
</dbReference>
<dbReference type="GO" id="GO:0008253">
    <property type="term" value="F:5'-nucleotidase activity"/>
    <property type="evidence" value="ECO:0000304"/>
    <property type="project" value="Reactome"/>
</dbReference>
<dbReference type="GO" id="GO:0000287">
    <property type="term" value="F:magnesium ion binding"/>
    <property type="evidence" value="ECO:0007669"/>
    <property type="project" value="InterPro"/>
</dbReference>
<dbReference type="GO" id="GO:0000166">
    <property type="term" value="F:nucleotide binding"/>
    <property type="evidence" value="ECO:0007669"/>
    <property type="project" value="UniProtKB-KW"/>
</dbReference>
<dbReference type="GO" id="GO:0000288">
    <property type="term" value="P:nuclear-transcribed mRNA catabolic process, deadenylation-dependent decay"/>
    <property type="evidence" value="ECO:0000304"/>
    <property type="project" value="Reactome"/>
</dbReference>
<dbReference type="GO" id="GO:0009117">
    <property type="term" value="P:nucleotide metabolic process"/>
    <property type="evidence" value="ECO:0007669"/>
    <property type="project" value="UniProtKB-KW"/>
</dbReference>
<dbReference type="CDD" id="cd07504">
    <property type="entry name" value="HAD_5NT"/>
    <property type="match status" value="1"/>
</dbReference>
<dbReference type="FunFam" id="1.10.150.340:FF:000001">
    <property type="entry name" value="Cytosolic 5-nucleotidase 3-like"/>
    <property type="match status" value="1"/>
</dbReference>
<dbReference type="FunFam" id="3.40.50.1000:FF:000032">
    <property type="entry name" value="Cytosolic 5-nucleotidase 3-like"/>
    <property type="match status" value="1"/>
</dbReference>
<dbReference type="Gene3D" id="3.40.50.1000">
    <property type="entry name" value="HAD superfamily/HAD-like"/>
    <property type="match status" value="1"/>
</dbReference>
<dbReference type="Gene3D" id="1.10.150.340">
    <property type="entry name" value="Pyrimidine 5'-nucleotidase (UMPH-1), N-terminal domain"/>
    <property type="match status" value="1"/>
</dbReference>
<dbReference type="InterPro" id="IPR036412">
    <property type="entry name" value="HAD-like_sf"/>
</dbReference>
<dbReference type="InterPro" id="IPR023214">
    <property type="entry name" value="HAD_sf"/>
</dbReference>
<dbReference type="InterPro" id="IPR006434">
    <property type="entry name" value="Pyrimidine_nucleotidase_eu"/>
</dbReference>
<dbReference type="NCBIfam" id="TIGR01544">
    <property type="entry name" value="HAD-SF-IE"/>
    <property type="match status" value="1"/>
</dbReference>
<dbReference type="PANTHER" id="PTHR13045">
    <property type="entry name" value="5'-NUCLEOTIDASE"/>
    <property type="match status" value="1"/>
</dbReference>
<dbReference type="PANTHER" id="PTHR13045:SF15">
    <property type="entry name" value="7-METHYLGUANOSINE PHOSPHATE-SPECIFIC 5'-NUCLEOTIDASE"/>
    <property type="match status" value="1"/>
</dbReference>
<dbReference type="Pfam" id="PF05822">
    <property type="entry name" value="UMPH-1"/>
    <property type="match status" value="1"/>
</dbReference>
<dbReference type="SFLD" id="SFLDG01128">
    <property type="entry name" value="C1.4:_5'-Nucleotidase_Like"/>
    <property type="match status" value="1"/>
</dbReference>
<dbReference type="SFLD" id="SFLDS00003">
    <property type="entry name" value="Haloacid_Dehalogenase"/>
    <property type="match status" value="1"/>
</dbReference>
<dbReference type="SUPFAM" id="SSF56784">
    <property type="entry name" value="HAD-like"/>
    <property type="match status" value="1"/>
</dbReference>
<evidence type="ECO:0000250" key="1">
    <source>
        <dbReference type="UniProtKB" id="Q9H0P0"/>
    </source>
</evidence>
<evidence type="ECO:0000250" key="2">
    <source>
        <dbReference type="UniProtKB" id="Q9W197"/>
    </source>
</evidence>
<evidence type="ECO:0000269" key="3">
    <source>
    </source>
</evidence>
<evidence type="ECO:0000269" key="4">
    <source>
    </source>
</evidence>
<evidence type="ECO:0000269" key="5">
    <source>
    </source>
</evidence>
<evidence type="ECO:0000269" key="6">
    <source ref="2"/>
</evidence>
<evidence type="ECO:0000303" key="7">
    <source>
    </source>
</evidence>
<evidence type="ECO:0000305" key="8"/>
<evidence type="ECO:0000305" key="9">
    <source>
    </source>
</evidence>
<evidence type="ECO:0007744" key="10">
    <source>
    </source>
</evidence>
<evidence type="ECO:0007829" key="11">
    <source>
        <dbReference type="PDB" id="7ZEE"/>
    </source>
</evidence>
<evidence type="ECO:0007829" key="12">
    <source>
        <dbReference type="PDB" id="7ZEH"/>
    </source>
</evidence>
<reference key="1">
    <citation type="journal article" date="2006" name="Nature">
        <title>DNA sequence of human chromosome 17 and analysis of rearrangement in the human lineage.</title>
        <authorList>
            <person name="Zody M.C."/>
            <person name="Garber M."/>
            <person name="Adams D.J."/>
            <person name="Sharpe T."/>
            <person name="Harrow J."/>
            <person name="Lupski J.R."/>
            <person name="Nicholson C."/>
            <person name="Searle S.M."/>
            <person name="Wilming L."/>
            <person name="Young S.K."/>
            <person name="Abouelleil A."/>
            <person name="Allen N.R."/>
            <person name="Bi W."/>
            <person name="Bloom T."/>
            <person name="Borowsky M.L."/>
            <person name="Bugalter B.E."/>
            <person name="Butler J."/>
            <person name="Chang J.L."/>
            <person name="Chen C.-K."/>
            <person name="Cook A."/>
            <person name="Corum B."/>
            <person name="Cuomo C.A."/>
            <person name="de Jong P.J."/>
            <person name="DeCaprio D."/>
            <person name="Dewar K."/>
            <person name="FitzGerald M."/>
            <person name="Gilbert J."/>
            <person name="Gibson R."/>
            <person name="Gnerre S."/>
            <person name="Goldstein S."/>
            <person name="Grafham D.V."/>
            <person name="Grocock R."/>
            <person name="Hafez N."/>
            <person name="Hagopian D.S."/>
            <person name="Hart E."/>
            <person name="Norman C.H."/>
            <person name="Humphray S."/>
            <person name="Jaffe D.B."/>
            <person name="Jones M."/>
            <person name="Kamal M."/>
            <person name="Khodiyar V.K."/>
            <person name="LaButti K."/>
            <person name="Laird G."/>
            <person name="Lehoczky J."/>
            <person name="Liu X."/>
            <person name="Lokyitsang T."/>
            <person name="Loveland J."/>
            <person name="Lui A."/>
            <person name="Macdonald P."/>
            <person name="Major J.E."/>
            <person name="Matthews L."/>
            <person name="Mauceli E."/>
            <person name="McCarroll S.A."/>
            <person name="Mihalev A.H."/>
            <person name="Mudge J."/>
            <person name="Nguyen C."/>
            <person name="Nicol R."/>
            <person name="O'Leary S.B."/>
            <person name="Osoegawa K."/>
            <person name="Schwartz D.C."/>
            <person name="Shaw-Smith C."/>
            <person name="Stankiewicz P."/>
            <person name="Steward C."/>
            <person name="Swarbreck D."/>
            <person name="Venkataraman V."/>
            <person name="Whittaker C.A."/>
            <person name="Yang X."/>
            <person name="Zimmer A.R."/>
            <person name="Bradley A."/>
            <person name="Hubbard T."/>
            <person name="Birren B.W."/>
            <person name="Rogers J."/>
            <person name="Lander E.S."/>
            <person name="Nusbaum C."/>
        </authorList>
    </citation>
    <scope>NUCLEOTIDE SEQUENCE [LARGE SCALE GENOMIC DNA]</scope>
</reference>
<reference key="2">
    <citation type="submission" date="2005-07" db="EMBL/GenBank/DDBJ databases">
        <authorList>
            <person name="Mural R.J."/>
            <person name="Istrail S."/>
            <person name="Sutton G.G."/>
            <person name="Florea L."/>
            <person name="Halpern A.L."/>
            <person name="Mobarry C.M."/>
            <person name="Lippert R."/>
            <person name="Walenz B."/>
            <person name="Shatkay H."/>
            <person name="Dew I."/>
            <person name="Miller J.R."/>
            <person name="Flanigan M.J."/>
            <person name="Edwards N.J."/>
            <person name="Bolanos R."/>
            <person name="Fasulo D."/>
            <person name="Halldorsson B.V."/>
            <person name="Hannenhalli S."/>
            <person name="Turner R."/>
            <person name="Yooseph S."/>
            <person name="Lu F."/>
            <person name="Nusskern D.R."/>
            <person name="Shue B.C."/>
            <person name="Zheng X.H."/>
            <person name="Zhong F."/>
            <person name="Delcher A.L."/>
            <person name="Huson D.H."/>
            <person name="Kravitz S.A."/>
            <person name="Mouchard L."/>
            <person name="Reinert K."/>
            <person name="Remington K.A."/>
            <person name="Clark A.G."/>
            <person name="Waterman M.S."/>
            <person name="Eichler E.E."/>
            <person name="Adams M.D."/>
            <person name="Hunkapiller M.W."/>
            <person name="Myers E.W."/>
            <person name="Venter J.C."/>
        </authorList>
    </citation>
    <scope>NUCLEOTIDE SEQUENCE [LARGE SCALE GENOMIC DNA]</scope>
    <scope>VARIANTS VAL-209 AND CYS-213</scope>
</reference>
<reference key="3">
    <citation type="journal article" date="2004" name="Genome Res.">
        <title>The status, quality, and expansion of the NIH full-length cDNA project: the Mammalian Gene Collection (MGC).</title>
        <authorList>
            <consortium name="The MGC Project Team"/>
        </authorList>
    </citation>
    <scope>NUCLEOTIDE SEQUENCE [LARGE SCALE MRNA] (ISOFORM 2)</scope>
    <scope>VARIANTS VAL-209 AND CYS-213</scope>
    <source>
        <tissue>Liver</tissue>
        <tissue>Lung</tissue>
        <tissue>Testis</tissue>
    </source>
</reference>
<reference key="4">
    <citation type="journal article" date="2009" name="Science">
        <title>Lysine acetylation targets protein complexes and co-regulates major cellular functions.</title>
        <authorList>
            <person name="Choudhary C."/>
            <person name="Kumar C."/>
            <person name="Gnad F."/>
            <person name="Nielsen M.L."/>
            <person name="Rehman M."/>
            <person name="Walther T.C."/>
            <person name="Olsen J.V."/>
            <person name="Mann M."/>
        </authorList>
    </citation>
    <scope>ACETYLATION [LARGE SCALE ANALYSIS] AT LYS-256</scope>
    <scope>IDENTIFICATION BY MASS SPECTROMETRY [LARGE SCALE ANALYSIS]</scope>
</reference>
<reference key="5">
    <citation type="journal article" date="2011" name="BMC Syst. Biol.">
        <title>Initial characterization of the human central proteome.</title>
        <authorList>
            <person name="Burkard T.R."/>
            <person name="Planyavsky M."/>
            <person name="Kaupe I."/>
            <person name="Breitwieser F.P."/>
            <person name="Buerckstuemmer T."/>
            <person name="Bennett K.L."/>
            <person name="Superti-Furga G."/>
            <person name="Colinge J."/>
        </authorList>
    </citation>
    <scope>IDENTIFICATION BY MASS SPECTROMETRY [LARGE SCALE ANALYSIS]</scope>
</reference>
<reference key="6">
    <citation type="journal article" date="2013" name="J. Biol. Chem.">
        <title>Identification of Drosophila and Human 7-Methyl GMP-specific Nucleotidases.</title>
        <authorList>
            <person name="Buschmann J."/>
            <person name="Moritz B."/>
            <person name="Jeske M."/>
            <person name="Lilie H."/>
            <person name="Schierhorn A."/>
            <person name="Wahle E."/>
        </authorList>
    </citation>
    <scope>FUNCTION</scope>
    <scope>CATALYTIC ACTIVITY</scope>
    <scope>BIOPHYSICOCHEMICAL PROPERTIES</scope>
    <scope>SUBUNIT</scope>
</reference>
<reference key="7">
    <citation type="journal article" date="2014" name="PLoS ONE">
        <title>Crystal structures of the novel cytosolic 5'-nucleotidase IIIB explain its preference for m7GMP.</title>
        <authorList>
            <person name="Monecke T."/>
            <person name="Buschmann J."/>
            <person name="Neumann P."/>
            <person name="Wahle E."/>
            <person name="Ficner R."/>
        </authorList>
    </citation>
    <scope>FUNCTION</scope>
    <scope>CATALYTIC ACTIVITY</scope>
    <scope>BIOPHYSICOCHEMICAL PROPERTIES</scope>
</reference>
<feature type="chain" id="PRO_0000328948" description="7-methylguanosine phosphate-specific 5'-nucleotidase">
    <location>
        <begin position="1"/>
        <end position="300"/>
    </location>
</feature>
<feature type="active site" description="Nucleophile" evidence="2">
    <location>
        <position position="41"/>
    </location>
</feature>
<feature type="active site" description="Proton donor" evidence="2">
    <location>
        <position position="43"/>
    </location>
</feature>
<feature type="binding site" evidence="2">
    <location>
        <position position="41"/>
    </location>
    <ligand>
        <name>Mg(2+)</name>
        <dbReference type="ChEBI" id="CHEBI:18420"/>
    </ligand>
</feature>
<feature type="binding site" evidence="2">
    <location>
        <position position="43"/>
    </location>
    <ligand>
        <name>Mg(2+)</name>
        <dbReference type="ChEBI" id="CHEBI:18420"/>
    </ligand>
</feature>
<feature type="binding site" evidence="2">
    <location>
        <position position="88"/>
    </location>
    <ligand>
        <name>CMP</name>
        <dbReference type="ChEBI" id="CHEBI:60377"/>
    </ligand>
</feature>
<feature type="binding site" evidence="2">
    <location>
        <position position="88"/>
    </location>
    <ligand>
        <name>N(7)-methyl-GMP</name>
        <dbReference type="ChEBI" id="CHEBI:58285"/>
    </ligand>
</feature>
<feature type="binding site" evidence="1">
    <location>
        <begin position="156"/>
        <end position="157"/>
    </location>
    <ligand>
        <name>substrate</name>
    </ligand>
</feature>
<feature type="binding site" evidence="1">
    <location>
        <position position="205"/>
    </location>
    <ligand>
        <name>substrate</name>
    </ligand>
</feature>
<feature type="binding site" evidence="2">
    <location>
        <position position="230"/>
    </location>
    <ligand>
        <name>Mg(2+)</name>
        <dbReference type="ChEBI" id="CHEBI:18420"/>
    </ligand>
</feature>
<feature type="modified residue" description="N6-acetyllysine" evidence="10">
    <location>
        <position position="256"/>
    </location>
</feature>
<feature type="splice variant" id="VSP_046297" description="In isoform 2." evidence="7">
    <location>
        <begin position="1"/>
        <end position="8"/>
    </location>
</feature>
<feature type="sequence variant" id="VAR_042582" description="In dbSNP:rs1046403." evidence="3 6">
    <original>A</original>
    <variation>V</variation>
    <location>
        <position position="209"/>
    </location>
</feature>
<feature type="sequence variant" id="VAR_042583" description="In dbSNP:rs1046404." evidence="3 6">
    <original>S</original>
    <variation>C</variation>
    <location>
        <position position="213"/>
    </location>
</feature>
<feature type="helix" evidence="11">
    <location>
        <begin position="1"/>
        <end position="3"/>
    </location>
</feature>
<feature type="helix" evidence="12">
    <location>
        <begin position="7"/>
        <end position="9"/>
    </location>
</feature>
<feature type="helix" evidence="11">
    <location>
        <begin position="18"/>
        <end position="31"/>
    </location>
</feature>
<feature type="helix" evidence="11">
    <location>
        <begin position="33"/>
        <end position="35"/>
    </location>
</feature>
<feature type="strand" evidence="11">
    <location>
        <begin position="36"/>
        <end position="41"/>
    </location>
</feature>
<feature type="helix" evidence="11">
    <location>
        <begin position="42"/>
        <end position="46"/>
    </location>
</feature>
<feature type="strand" evidence="11">
    <location>
        <begin position="49"/>
        <end position="51"/>
    </location>
</feature>
<feature type="helix" evidence="11">
    <location>
        <begin position="59"/>
        <end position="61"/>
    </location>
</feature>
<feature type="turn" evidence="11">
    <location>
        <begin position="62"/>
        <end position="65"/>
    </location>
</feature>
<feature type="helix" evidence="11">
    <location>
        <begin position="71"/>
        <end position="88"/>
    </location>
</feature>
<feature type="helix" evidence="11">
    <location>
        <begin position="95"/>
        <end position="114"/>
    </location>
</feature>
<feature type="helix" evidence="11">
    <location>
        <begin position="121"/>
        <end position="129"/>
    </location>
</feature>
<feature type="helix" evidence="11">
    <location>
        <begin position="138"/>
        <end position="147"/>
    </location>
</feature>
<feature type="strand" evidence="11">
    <location>
        <begin position="152"/>
        <end position="159"/>
    </location>
</feature>
<feature type="helix" evidence="11">
    <location>
        <begin position="160"/>
        <end position="169"/>
    </location>
</feature>
<feature type="strand" evidence="11">
    <location>
        <begin position="177"/>
        <end position="186"/>
    </location>
</feature>
<feature type="strand" evidence="11">
    <location>
        <begin position="190"/>
        <end position="197"/>
    </location>
</feature>
<feature type="helix" evidence="11">
    <location>
        <begin position="207"/>
        <end position="209"/>
    </location>
</feature>
<feature type="strand" evidence="11">
    <location>
        <begin position="224"/>
        <end position="232"/>
    </location>
</feature>
<feature type="helix" evidence="11">
    <location>
        <begin position="233"/>
        <end position="236"/>
    </location>
</feature>
<feature type="turn" evidence="11">
    <location>
        <begin position="237"/>
        <end position="240"/>
    </location>
</feature>
<feature type="strand" evidence="11">
    <location>
        <begin position="246"/>
        <end position="253"/>
    </location>
</feature>
<feature type="helix" evidence="11">
    <location>
        <begin position="257"/>
        <end position="267"/>
    </location>
</feature>
<feature type="strand" evidence="11">
    <location>
        <begin position="269"/>
        <end position="274"/>
    </location>
</feature>
<feature type="helix" evidence="11">
    <location>
        <begin position="279"/>
        <end position="289"/>
    </location>
</feature>
<organism>
    <name type="scientific">Homo sapiens</name>
    <name type="common">Human</name>
    <dbReference type="NCBI Taxonomy" id="9606"/>
    <lineage>
        <taxon>Eukaryota</taxon>
        <taxon>Metazoa</taxon>
        <taxon>Chordata</taxon>
        <taxon>Craniata</taxon>
        <taxon>Vertebrata</taxon>
        <taxon>Euteleostomi</taxon>
        <taxon>Mammalia</taxon>
        <taxon>Eutheria</taxon>
        <taxon>Euarchontoglires</taxon>
        <taxon>Primates</taxon>
        <taxon>Haplorrhini</taxon>
        <taxon>Catarrhini</taxon>
        <taxon>Hominidae</taxon>
        <taxon>Homo</taxon>
    </lineage>
</organism>
<gene>
    <name type="primary">NT5C3B</name>
    <name type="synonym">NT5C3L</name>
</gene>
<protein>
    <recommendedName>
        <fullName evidence="9">7-methylguanosine phosphate-specific 5'-nucleotidase</fullName>
        <shortName>7-methylguanosine nucleotidase</shortName>
        <ecNumber evidence="4">3.1.3.91</ecNumber>
    </recommendedName>
    <alternativeName>
        <fullName>Cytosolic 5'-nucleotidase 3B</fullName>
    </alternativeName>
    <alternativeName>
        <fullName evidence="9">Cytosolic 5'-nucleotidase III-like protein</fullName>
        <shortName>cN-III-like protein</shortName>
        <ecNumber evidence="4">3.1.3.5</ecNumber>
    </alternativeName>
    <alternativeName>
        <fullName>N(7)-methylguanylate 5'-phosphatase</fullName>
    </alternativeName>
</protein>
<name>5NT3B_HUMAN</name>
<accession>Q969T7</accession>
<accession>A8MWB9</accession>
<accession>C9JKC4</accession>
<accession>Q7L3B7</accession>
<comment type="function">
    <text evidence="4 5">Specifically hydrolyzes 7-methylguanosine monophosphate (m(7)GMP) to 7-methylguanosine and inorganic phosphate (PubMed:23223233, PubMed:24603684). The specific activity for m(7)GMP may protect cells against undesired salvage of m(7)GMP and its incorporation into nucleic acids (PubMed:23223233). Also has weak activity for CMP (PubMed:23223233, PubMed:24603684). UMP and purine nucleotides are poor substrates (PubMed:23223233).</text>
</comment>
<comment type="catalytic activity">
    <reaction evidence="4">
        <text>N(7)-methyl-GMP + H2O = N(7)-methylguanosine + phosphate</text>
        <dbReference type="Rhea" id="RHEA:37107"/>
        <dbReference type="ChEBI" id="CHEBI:15377"/>
        <dbReference type="ChEBI" id="CHEBI:20794"/>
        <dbReference type="ChEBI" id="CHEBI:43474"/>
        <dbReference type="ChEBI" id="CHEBI:58285"/>
        <dbReference type="EC" id="3.1.3.91"/>
    </reaction>
</comment>
<comment type="catalytic activity">
    <reaction evidence="4">
        <text>CMP + H2O = cytidine + phosphate</text>
        <dbReference type="Rhea" id="RHEA:29367"/>
        <dbReference type="ChEBI" id="CHEBI:15377"/>
        <dbReference type="ChEBI" id="CHEBI:17562"/>
        <dbReference type="ChEBI" id="CHEBI:43474"/>
        <dbReference type="ChEBI" id="CHEBI:60377"/>
        <dbReference type="EC" id="3.1.3.91"/>
    </reaction>
</comment>
<comment type="catalytic activity">
    <reaction evidence="4">
        <text>a ribonucleoside 5'-phosphate + H2O = a ribonucleoside + phosphate</text>
        <dbReference type="Rhea" id="RHEA:12484"/>
        <dbReference type="ChEBI" id="CHEBI:15377"/>
        <dbReference type="ChEBI" id="CHEBI:18254"/>
        <dbReference type="ChEBI" id="CHEBI:43474"/>
        <dbReference type="ChEBI" id="CHEBI:58043"/>
        <dbReference type="EC" id="3.1.3.5"/>
    </reaction>
</comment>
<comment type="biophysicochemical properties">
    <kinetics>
        <KM evidence="4">7.8 uM for m(7)GMP (at 37 degrees Celsius)</KM>
        <KM evidence="5">8 uM for m(7)GMP (at 37 degrees Celsius)</KM>
        <KM evidence="4 5">79 uM for CMP (at 37 degrees Celsius)</KM>
        <KM evidence="4">355 uM for GMP (at 37 degrees Celsius)</KM>
        <KM evidence="4">456 uM for AMP (at 37 degrees Celsius)</KM>
        <KM evidence="4">439 uM for UMP (at 37 degrees Celsius)</KM>
        <Vmax evidence="4">0.41 umol/min/mg enzyme with m(7)GMP as substrate</Vmax>
        <Vmax evidence="4">12.0 umol/min/mg enzyme with CMP as substrate</Vmax>
        <Vmax evidence="4">0.13 umol/min/mg enzyme with GMP as substrate</Vmax>
        <Vmax evidence="4">0.07 umol/min/mg enzyme with AMP as substrate</Vmax>
        <Vmax evidence="4">10.7 umol/min/mg enzyme with UMP as substrate</Vmax>
        <text>kcat is 0.24 sec(-1) with m(7)GMP. kcat is 7 sec(-1) with CMP. kcat is 0.07 sec(-1) with GMP. kcat is 0.04 sec(-1) with AMP. kcat is 6.2 sec(-1) with UMP.</text>
    </kinetics>
</comment>
<comment type="subunit">
    <text evidence="4">Monomer.</text>
</comment>
<comment type="subcellular location">
    <subcellularLocation>
        <location evidence="8">Cytoplasm</location>
    </subcellularLocation>
</comment>
<comment type="alternative products">
    <event type="alternative splicing"/>
    <isoform>
        <id>Q969T7-1</id>
        <name>1</name>
        <sequence type="displayed"/>
    </isoform>
    <isoform>
        <id>Q969T7-2</id>
        <name>2</name>
        <sequence type="described" ref="VSP_046297"/>
    </isoform>
</comment>
<comment type="similarity">
    <text evidence="8">Belongs to the pyrimidine 5'-nucleotidase family.</text>
</comment>
<keyword id="KW-0002">3D-structure</keyword>
<keyword id="KW-0007">Acetylation</keyword>
<keyword id="KW-0025">Alternative splicing</keyword>
<keyword id="KW-0963">Cytoplasm</keyword>
<keyword id="KW-0378">Hydrolase</keyword>
<keyword id="KW-0460">Magnesium</keyword>
<keyword id="KW-0479">Metal-binding</keyword>
<keyword id="KW-0546">Nucleotide metabolism</keyword>
<keyword id="KW-0547">Nucleotide-binding</keyword>
<keyword id="KW-1267">Proteomics identification</keyword>
<keyword id="KW-1185">Reference proteome</keyword>
<proteinExistence type="evidence at protein level"/>